<feature type="chain" id="PRO_0000377927" description="Uncharacterized protein 042R">
    <location>
        <begin position="1"/>
        <end position="159"/>
    </location>
</feature>
<comment type="similarity">
    <text evidence="1">Belongs to the IIV-6 136R family.</text>
</comment>
<dbReference type="EMBL" id="DQ643392">
    <property type="protein sequence ID" value="ABF82072.1"/>
    <property type="molecule type" value="Genomic_DNA"/>
</dbReference>
<dbReference type="RefSeq" id="YP_654614.1">
    <property type="nucleotide sequence ID" value="NC_008187.1"/>
</dbReference>
<dbReference type="KEGG" id="vg:4156352"/>
<dbReference type="OrthoDB" id="18386at10239"/>
<dbReference type="Proteomes" id="UP000001358">
    <property type="component" value="Genome"/>
</dbReference>
<protein>
    <recommendedName>
        <fullName>Uncharacterized protein 042R</fullName>
    </recommendedName>
</protein>
<proteinExistence type="inferred from homology"/>
<keyword id="KW-1185">Reference proteome</keyword>
<organism>
    <name type="scientific">Invertebrate iridescent virus 3</name>
    <name type="common">IIV-3</name>
    <name type="synonym">Mosquito iridescent virus</name>
    <dbReference type="NCBI Taxonomy" id="345201"/>
    <lineage>
        <taxon>Viruses</taxon>
        <taxon>Varidnaviria</taxon>
        <taxon>Bamfordvirae</taxon>
        <taxon>Nucleocytoviricota</taxon>
        <taxon>Megaviricetes</taxon>
        <taxon>Pimascovirales</taxon>
        <taxon>Iridoviridae</taxon>
        <taxon>Betairidovirinae</taxon>
        <taxon>Chloriridovirus</taxon>
    </lineage>
</organism>
<reference key="1">
    <citation type="journal article" date="2006" name="J. Virol.">
        <title>Genome of invertebrate iridescent virus type 3 (mosquito iridescent virus).</title>
        <authorList>
            <person name="Delhon G."/>
            <person name="Tulman E.R."/>
            <person name="Afonso C.L."/>
            <person name="Lu Z."/>
            <person name="Becnel J.J."/>
            <person name="Moser B.A."/>
            <person name="Kutish G.F."/>
            <person name="Rock D.L."/>
        </authorList>
    </citation>
    <scope>NUCLEOTIDE SEQUENCE [LARGE SCALE GENOMIC DNA]</scope>
</reference>
<organismHost>
    <name type="scientific">Aedes vexans</name>
    <name type="common">Inland floodwater mosquito</name>
    <name type="synonym">Culex vexans</name>
    <dbReference type="NCBI Taxonomy" id="7163"/>
</organismHost>
<organismHost>
    <name type="scientific">Culex territans</name>
    <dbReference type="NCBI Taxonomy" id="42431"/>
</organismHost>
<organismHost>
    <name type="scientific">Culiseta annulata</name>
    <dbReference type="NCBI Taxonomy" id="332058"/>
</organismHost>
<organismHost>
    <name type="scientific">Ochlerotatus sollicitans</name>
    <name type="common">eastern saltmarsh mosquito</name>
    <dbReference type="NCBI Taxonomy" id="310513"/>
</organismHost>
<organismHost>
    <name type="scientific">Ochlerotatus taeniorhynchus</name>
    <name type="common">Black salt marsh mosquito</name>
    <name type="synonym">Aedes taeniorhynchus</name>
    <dbReference type="NCBI Taxonomy" id="329105"/>
</organismHost>
<organismHost>
    <name type="scientific">Psorophora ferox</name>
    <dbReference type="NCBI Taxonomy" id="7183"/>
</organismHost>
<name>VF136_IIV3</name>
<sequence>MVHFMVCGILLGFLVFKISRHLESRRDDGEFAPSTNLVWDLRRDLGNLFYGPNSGPLVGPLEPLNDLNIFNNLKIVEDQESYTLNKKIIHLCTRDLRSKRYYDKNTLMFVVLHELAHVLCRDIGHTDNFSTINQALLDYAIARGYYDPRKPFVKNYCSL</sequence>
<accession>Q197B8</accession>
<evidence type="ECO:0000305" key="1"/>
<gene>
    <name type="ORF">IIV3-042R</name>
</gene>